<gene>
    <name type="primary">DNA-R</name>
    <name type="synonym">C1</name>
</gene>
<name>U5_BBTVA</name>
<dbReference type="EMBL" id="S56276">
    <property type="status" value="NOT_ANNOTATED_CDS"/>
    <property type="molecule type" value="Genomic_DNA"/>
</dbReference>
<dbReference type="Proteomes" id="UP000002339">
    <property type="component" value="Genome"/>
</dbReference>
<proteinExistence type="predicted"/>
<accession>P0C749</accession>
<organismHost>
    <name type="scientific">Musa</name>
    <dbReference type="NCBI Taxonomy" id="4640"/>
</organismHost>
<reference key="1">
    <citation type="journal article" date="1993" name="J. Gen. Virol.">
        <title>Nucleotide sequence of one component of the banana bunchy top virus genome contains a putative replicase gene.</title>
        <authorList>
            <person name="Harding R.M."/>
            <person name="Burns T.M."/>
            <person name="Hafner G.J."/>
            <person name="Dietzgen R.G."/>
            <person name="Dale J.L."/>
        </authorList>
    </citation>
    <scope>NUCLEOTIDE SEQUENCE [GENOMIC DNA]</scope>
</reference>
<reference key="2">
    <citation type="journal article" date="1997" name="J. Gen. Virol.">
        <title>Two mRNAs are transcribed from banana bunchy top virus DNA-1.</title>
        <authorList>
            <person name="Beetham P.R."/>
            <person name="Hafner G.J."/>
            <person name="Harding R.M."/>
            <person name="Dale J.L."/>
        </authorList>
    </citation>
    <scope>IDENTIFICATION</scope>
</reference>
<keyword id="KW-1185">Reference proteome</keyword>
<protein>
    <recommendedName>
        <fullName>Uncharacterized 5 kDa protein in M-Rep ORF</fullName>
    </recommendedName>
    <alternativeName>
        <fullName>Uncharacterized protein U5</fullName>
    </alternativeName>
</protein>
<organism>
    <name type="scientific">Banana bunchy top virus (isolate Autralia)</name>
    <name type="common">BBTV</name>
    <dbReference type="NCBI Taxonomy" id="645099"/>
    <lineage>
        <taxon>Viruses</taxon>
        <taxon>Monodnaviria</taxon>
        <taxon>Shotokuvirae</taxon>
        <taxon>Cressdnaviricota</taxon>
        <taxon>Arfiviricetes</taxon>
        <taxon>Mulpavirales</taxon>
        <taxon>Nanoviridae</taxon>
        <taxon>Babuvirus</taxon>
        <taxon>Babuvirus musae</taxon>
        <taxon>Banana bunchy top virus</taxon>
    </lineage>
</organism>
<sequence>MIIYLMSYRICVKRTKGLWSIYMIVLTPSIEVRIHYTEYKQR</sequence>
<feature type="chain" id="PRO_0000378549" description="Uncharacterized 5 kDa protein in M-Rep ORF">
    <location>
        <begin position="1"/>
        <end position="42"/>
    </location>
</feature>